<name>UBIA_POLNA</name>
<gene>
    <name evidence="1" type="primary">ubiA</name>
    <name type="ordered locus">Pnap_0326</name>
</gene>
<comment type="function">
    <text evidence="1">Catalyzes the prenylation of para-hydroxybenzoate (PHB) with an all-trans polyprenyl group. Mediates the second step in the final reaction sequence of ubiquinone-8 (UQ-8) biosynthesis, which is the condensation of the polyisoprenoid side chain with PHB, generating the first membrane-bound Q intermediate 3-octaprenyl-4-hydroxybenzoate.</text>
</comment>
<comment type="catalytic activity">
    <reaction evidence="1">
        <text>all-trans-octaprenyl diphosphate + 4-hydroxybenzoate = 4-hydroxy-3-(all-trans-octaprenyl)benzoate + diphosphate</text>
        <dbReference type="Rhea" id="RHEA:27782"/>
        <dbReference type="ChEBI" id="CHEBI:1617"/>
        <dbReference type="ChEBI" id="CHEBI:17879"/>
        <dbReference type="ChEBI" id="CHEBI:33019"/>
        <dbReference type="ChEBI" id="CHEBI:57711"/>
        <dbReference type="EC" id="2.5.1.39"/>
    </reaction>
</comment>
<comment type="cofactor">
    <cofactor evidence="1">
        <name>Mg(2+)</name>
        <dbReference type="ChEBI" id="CHEBI:18420"/>
    </cofactor>
</comment>
<comment type="pathway">
    <text evidence="1">Cofactor biosynthesis; ubiquinone biosynthesis.</text>
</comment>
<comment type="subcellular location">
    <subcellularLocation>
        <location evidence="1">Cell inner membrane</location>
        <topology evidence="1">Multi-pass membrane protein</topology>
    </subcellularLocation>
</comment>
<comment type="similarity">
    <text evidence="1">Belongs to the UbiA prenyltransferase family.</text>
</comment>
<proteinExistence type="inferred from homology"/>
<sequence>MTAGAPSKFSLYLQLIRWNRPAGWLLLLWPTLSALWLASHGFPGWHLVTVFTLGTFLMRSAGCCINDVADRDFDRHVKRTAQRPVTSGAVSVREALGLGAVLALLAFGLVLTTNAVTIAWSFAALAVTLAYPFAKRYVSMPQAVLGVAFSCGILMAFAAVQSRVPPLAWALLLGNLFWVIAYDTEYAMVDRDDDLKIGMKTSAITLGRFDVAGVMLSYLIFISIWAFALIQRAQSAIFMIAIALALAQALWHGWLIRKRERDDCFKAFRLNHWLGFTVFAGVALSYWGR</sequence>
<keyword id="KW-0997">Cell inner membrane</keyword>
<keyword id="KW-1003">Cell membrane</keyword>
<keyword id="KW-0460">Magnesium</keyword>
<keyword id="KW-0472">Membrane</keyword>
<keyword id="KW-1185">Reference proteome</keyword>
<keyword id="KW-0808">Transferase</keyword>
<keyword id="KW-0812">Transmembrane</keyword>
<keyword id="KW-1133">Transmembrane helix</keyword>
<keyword id="KW-0831">Ubiquinone biosynthesis</keyword>
<dbReference type="EC" id="2.5.1.39" evidence="1"/>
<dbReference type="EMBL" id="CP000529">
    <property type="protein sequence ID" value="ABM35649.1"/>
    <property type="molecule type" value="Genomic_DNA"/>
</dbReference>
<dbReference type="RefSeq" id="WP_011799756.1">
    <property type="nucleotide sequence ID" value="NC_008781.1"/>
</dbReference>
<dbReference type="SMR" id="A1VJ21"/>
<dbReference type="STRING" id="365044.Pnap_0326"/>
<dbReference type="KEGG" id="pna:Pnap_0326"/>
<dbReference type="eggNOG" id="COG0382">
    <property type="taxonomic scope" value="Bacteria"/>
</dbReference>
<dbReference type="HOGENOM" id="CLU_034879_1_0_4"/>
<dbReference type="OrthoDB" id="9782418at2"/>
<dbReference type="UniPathway" id="UPA00232"/>
<dbReference type="Proteomes" id="UP000000644">
    <property type="component" value="Chromosome"/>
</dbReference>
<dbReference type="GO" id="GO:0005886">
    <property type="term" value="C:plasma membrane"/>
    <property type="evidence" value="ECO:0007669"/>
    <property type="project" value="UniProtKB-SubCell"/>
</dbReference>
<dbReference type="GO" id="GO:0008412">
    <property type="term" value="F:4-hydroxybenzoate polyprenyltransferase activity"/>
    <property type="evidence" value="ECO:0007669"/>
    <property type="project" value="UniProtKB-UniRule"/>
</dbReference>
<dbReference type="GO" id="GO:0006744">
    <property type="term" value="P:ubiquinone biosynthetic process"/>
    <property type="evidence" value="ECO:0007669"/>
    <property type="project" value="UniProtKB-UniRule"/>
</dbReference>
<dbReference type="CDD" id="cd13959">
    <property type="entry name" value="PT_UbiA_COQ2"/>
    <property type="match status" value="1"/>
</dbReference>
<dbReference type="FunFam" id="1.10.357.140:FF:000008">
    <property type="entry name" value="4-hydroxybenzoate octaprenyltransferase"/>
    <property type="match status" value="1"/>
</dbReference>
<dbReference type="FunFam" id="1.20.120.1780:FF:000001">
    <property type="entry name" value="4-hydroxybenzoate octaprenyltransferase"/>
    <property type="match status" value="1"/>
</dbReference>
<dbReference type="Gene3D" id="1.10.357.140">
    <property type="entry name" value="UbiA prenyltransferase"/>
    <property type="match status" value="1"/>
</dbReference>
<dbReference type="Gene3D" id="1.20.120.1780">
    <property type="entry name" value="UbiA prenyltransferase"/>
    <property type="match status" value="1"/>
</dbReference>
<dbReference type="HAMAP" id="MF_01635">
    <property type="entry name" value="UbiA"/>
    <property type="match status" value="1"/>
</dbReference>
<dbReference type="InterPro" id="IPR006370">
    <property type="entry name" value="HB_polyprenyltransferase-like"/>
</dbReference>
<dbReference type="InterPro" id="IPR039653">
    <property type="entry name" value="Prenyltransferase"/>
</dbReference>
<dbReference type="InterPro" id="IPR000537">
    <property type="entry name" value="UbiA_prenyltransferase"/>
</dbReference>
<dbReference type="InterPro" id="IPR030470">
    <property type="entry name" value="UbiA_prenylTrfase_CS"/>
</dbReference>
<dbReference type="InterPro" id="IPR044878">
    <property type="entry name" value="UbiA_sf"/>
</dbReference>
<dbReference type="NCBIfam" id="TIGR01474">
    <property type="entry name" value="ubiA_proteo"/>
    <property type="match status" value="1"/>
</dbReference>
<dbReference type="PANTHER" id="PTHR11048:SF28">
    <property type="entry name" value="4-HYDROXYBENZOATE POLYPRENYLTRANSFERASE, MITOCHONDRIAL"/>
    <property type="match status" value="1"/>
</dbReference>
<dbReference type="PANTHER" id="PTHR11048">
    <property type="entry name" value="PRENYLTRANSFERASES"/>
    <property type="match status" value="1"/>
</dbReference>
<dbReference type="Pfam" id="PF01040">
    <property type="entry name" value="UbiA"/>
    <property type="match status" value="1"/>
</dbReference>
<dbReference type="PROSITE" id="PS00943">
    <property type="entry name" value="UBIA"/>
    <property type="match status" value="1"/>
</dbReference>
<accession>A1VJ21</accession>
<reference key="1">
    <citation type="journal article" date="2009" name="Environ. Microbiol.">
        <title>The genome of Polaromonas naphthalenivorans strain CJ2, isolated from coal tar-contaminated sediment, reveals physiological and metabolic versatility and evolution through extensive horizontal gene transfer.</title>
        <authorList>
            <person name="Yagi J.M."/>
            <person name="Sims D."/>
            <person name="Brettin T."/>
            <person name="Bruce D."/>
            <person name="Madsen E.L."/>
        </authorList>
    </citation>
    <scope>NUCLEOTIDE SEQUENCE [LARGE SCALE GENOMIC DNA]</scope>
    <source>
        <strain>CJ2</strain>
    </source>
</reference>
<feature type="chain" id="PRO_0000336981" description="4-hydroxybenzoate octaprenyltransferase">
    <location>
        <begin position="1"/>
        <end position="289"/>
    </location>
</feature>
<feature type="transmembrane region" description="Helical" evidence="1">
    <location>
        <begin position="22"/>
        <end position="42"/>
    </location>
</feature>
<feature type="transmembrane region" description="Helical" evidence="1">
    <location>
        <begin position="45"/>
        <end position="65"/>
    </location>
</feature>
<feature type="transmembrane region" description="Helical" evidence="1">
    <location>
        <begin position="96"/>
        <end position="116"/>
    </location>
</feature>
<feature type="transmembrane region" description="Helical" evidence="1">
    <location>
        <begin position="118"/>
        <end position="138"/>
    </location>
</feature>
<feature type="transmembrane region" description="Helical" evidence="1">
    <location>
        <begin position="140"/>
        <end position="160"/>
    </location>
</feature>
<feature type="transmembrane region" description="Helical" evidence="1">
    <location>
        <begin position="164"/>
        <end position="184"/>
    </location>
</feature>
<feature type="transmembrane region" description="Helical" evidence="1">
    <location>
        <begin position="211"/>
        <end position="231"/>
    </location>
</feature>
<feature type="transmembrane region" description="Helical" evidence="1">
    <location>
        <begin position="236"/>
        <end position="256"/>
    </location>
</feature>
<feature type="transmembrane region" description="Helical" evidence="1">
    <location>
        <begin position="267"/>
        <end position="287"/>
    </location>
</feature>
<evidence type="ECO:0000255" key="1">
    <source>
        <dbReference type="HAMAP-Rule" id="MF_01635"/>
    </source>
</evidence>
<protein>
    <recommendedName>
        <fullName evidence="1">4-hydroxybenzoate octaprenyltransferase</fullName>
        <ecNumber evidence="1">2.5.1.39</ecNumber>
    </recommendedName>
    <alternativeName>
        <fullName evidence="1">4-HB polyprenyltransferase</fullName>
    </alternativeName>
</protein>
<organism>
    <name type="scientific">Polaromonas naphthalenivorans (strain CJ2)</name>
    <dbReference type="NCBI Taxonomy" id="365044"/>
    <lineage>
        <taxon>Bacteria</taxon>
        <taxon>Pseudomonadati</taxon>
        <taxon>Pseudomonadota</taxon>
        <taxon>Betaproteobacteria</taxon>
        <taxon>Burkholderiales</taxon>
        <taxon>Comamonadaceae</taxon>
        <taxon>Polaromonas</taxon>
    </lineage>
</organism>